<organismHost>
    <name type="scientific">Aedes</name>
    <dbReference type="NCBI Taxonomy" id="7158"/>
</organismHost>
<organismHost>
    <name type="scientific">Bos taurus</name>
    <name type="common">Bovine</name>
    <dbReference type="NCBI Taxonomy" id="9913"/>
</organismHost>
<organismHost>
    <name type="scientific">Culicoides</name>
    <dbReference type="NCBI Taxonomy" id="58271"/>
</organismHost>
<organismHost>
    <name type="scientific">Equus asinus</name>
    <name type="common">Donkey</name>
    <name type="synonym">Equus africanus asinus</name>
    <dbReference type="NCBI Taxonomy" id="9793"/>
</organismHost>
<organismHost>
    <name type="scientific">Equus caballus</name>
    <name type="common">Horse</name>
    <dbReference type="NCBI Taxonomy" id="9796"/>
</organismHost>
<organismHost>
    <name type="scientific">Homo sapiens</name>
    <name type="common">Human</name>
    <dbReference type="NCBI Taxonomy" id="9606"/>
</organismHost>
<organismHost>
    <name type="scientific">Lutzomyia</name>
    <dbReference type="NCBI Taxonomy" id="252607"/>
</organismHost>
<organismHost>
    <name type="scientific">Musca domestica</name>
    <name type="common">House fly</name>
    <dbReference type="NCBI Taxonomy" id="7370"/>
</organismHost>
<organismHost>
    <name type="scientific">Simuliidae</name>
    <name type="common">black flies</name>
    <dbReference type="NCBI Taxonomy" id="7190"/>
</organismHost>
<organismHost>
    <name type="scientific">Sus scrofa</name>
    <name type="common">Pig</name>
    <dbReference type="NCBI Taxonomy" id="9823"/>
</organismHost>
<protein>
    <recommendedName>
        <fullName evidence="1">Matrix protein</fullName>
        <shortName evidence="1">M protein</shortName>
    </recommendedName>
</protein>
<sequence length="237" mass="26825">MSSLKKILGLKGKGKKSKKLGIAPPPYEEDTSMEYAPSAPIDKSYFGVDEMDTHDPNQLRYEKSFFTVKMTVRSNRPFRTYSDVAAAVSHWDHMYIGMAGKRPFYKILAFLGSSNLKATPAVLADQGQPEYHAHCEGRAYLPHRMGKTPPMLNVPEHFRRPFNIGLYKGTIELTMTIYDDESLEAAPMIWDHFNSSKFSDFREKALMFGLIVEEEASGAWVLDSVRHSKWASLASSF</sequence>
<reference key="1">
    <citation type="journal article" date="1986" name="J. Gen. Virol.">
        <title>Evolution of vesicular stomatitis virus in athymic nude mice: mutations associated with natural killer cell selection.</title>
        <authorList>
            <person name="Vandepol S.B."/>
            <person name="Holland J.J."/>
        </authorList>
    </citation>
    <scope>NUCLEOTIDE SEQUENCE [GENOMIC RNA]</scope>
</reference>
<reference key="2">
    <citation type="journal article" date="1985" name="J. Virol.">
        <title>Sequence alterations in temperature-sensitive M-protein mutants (complementation group III) of vesicular stomatitis virus.</title>
        <authorList>
            <person name="Gopalakrishna Y."/>
            <person name="Lenard J."/>
        </authorList>
    </citation>
    <scope>NUCLEOTIDE SEQUENCE [GENOMIC RNA] OF 1-229</scope>
</reference>
<accession>P04876</accession>
<name>MATRX_VSIVG</name>
<evidence type="ECO:0000250" key="1">
    <source>
        <dbReference type="UniProtKB" id="P03519"/>
    </source>
</evidence>
<evidence type="ECO:0000250" key="2">
    <source>
        <dbReference type="UniProtKB" id="P08325"/>
    </source>
</evidence>
<evidence type="ECO:0000256" key="3">
    <source>
        <dbReference type="SAM" id="MobiDB-lite"/>
    </source>
</evidence>
<evidence type="ECO:0000305" key="4"/>
<dbReference type="EMBL" id="X04452">
    <property type="protein sequence ID" value="CAA28051.1"/>
    <property type="molecule type" value="Genomic_RNA"/>
</dbReference>
<dbReference type="EMBL" id="M11754">
    <property type="protein sequence ID" value="AAA48444.1"/>
    <property type="molecule type" value="Genomic_RNA"/>
</dbReference>
<dbReference type="PIR" id="A04112">
    <property type="entry name" value="MFVNGG"/>
</dbReference>
<dbReference type="SMR" id="P04876"/>
<dbReference type="IntAct" id="P04876">
    <property type="interactions" value="4"/>
</dbReference>
<dbReference type="Proteomes" id="UP000007544">
    <property type="component" value="Genome"/>
</dbReference>
<dbReference type="GO" id="GO:0030430">
    <property type="term" value="C:host cell cytoplasm"/>
    <property type="evidence" value="ECO:0007669"/>
    <property type="project" value="UniProtKB-SubCell"/>
</dbReference>
<dbReference type="GO" id="GO:0044200">
    <property type="term" value="C:host cell nuclear membrane"/>
    <property type="evidence" value="ECO:0007669"/>
    <property type="project" value="UniProtKB-SubCell"/>
</dbReference>
<dbReference type="GO" id="GO:0016020">
    <property type="term" value="C:membrane"/>
    <property type="evidence" value="ECO:0007669"/>
    <property type="project" value="UniProtKB-KW"/>
</dbReference>
<dbReference type="GO" id="GO:0019031">
    <property type="term" value="C:viral envelope"/>
    <property type="evidence" value="ECO:0007669"/>
    <property type="project" value="InterPro"/>
</dbReference>
<dbReference type="GO" id="GO:0039660">
    <property type="term" value="F:structural constituent of virion"/>
    <property type="evidence" value="ECO:0007669"/>
    <property type="project" value="UniProtKB-KW"/>
</dbReference>
<dbReference type="GO" id="GO:0039522">
    <property type="term" value="P:symbiont-mediated suppression of host mRNA export from nucleus"/>
    <property type="evidence" value="ECO:0007669"/>
    <property type="project" value="UniProtKB-KW"/>
</dbReference>
<dbReference type="GO" id="GO:0039602">
    <property type="term" value="P:symbiont-mediated suppression of host transcription initiation from RNA polymerase II promoter"/>
    <property type="evidence" value="ECO:0000250"/>
    <property type="project" value="UniProtKB"/>
</dbReference>
<dbReference type="GO" id="GO:0039702">
    <property type="term" value="P:viral budding via host ESCRT complex"/>
    <property type="evidence" value="ECO:0007669"/>
    <property type="project" value="UniProtKB-KW"/>
</dbReference>
<dbReference type="FunFam" id="3.10.460.10:FF:000001">
    <property type="entry name" value="Matrix protein"/>
    <property type="match status" value="1"/>
</dbReference>
<dbReference type="Gene3D" id="3.10.460.10">
    <property type="entry name" value="VSV matrix protein"/>
    <property type="match status" value="1"/>
</dbReference>
<dbReference type="InterPro" id="IPR009397">
    <property type="entry name" value="Vesiculo_matrix"/>
</dbReference>
<dbReference type="InterPro" id="IPR036711">
    <property type="entry name" value="VSV_matrix_sf"/>
</dbReference>
<dbReference type="Pfam" id="PF06326">
    <property type="entry name" value="Vesiculo_matrix"/>
    <property type="match status" value="1"/>
</dbReference>
<dbReference type="SUPFAM" id="SSF75404">
    <property type="entry name" value="VSV matrix protein"/>
    <property type="match status" value="1"/>
</dbReference>
<gene>
    <name type="primary">M</name>
</gene>
<organism>
    <name type="scientific">Vesicular stomatitis Indiana virus (strain Glasgow)</name>
    <name type="common">VSIV</name>
    <dbReference type="NCBI Taxonomy" id="11278"/>
    <lineage>
        <taxon>Viruses</taxon>
        <taxon>Riboviria</taxon>
        <taxon>Orthornavirae</taxon>
        <taxon>Negarnaviricota</taxon>
        <taxon>Haploviricotina</taxon>
        <taxon>Monjiviricetes</taxon>
        <taxon>Mononegavirales</taxon>
        <taxon>Rhabdoviridae</taxon>
        <taxon>Alpharhabdovirinae</taxon>
        <taxon>Vesiculovirus</taxon>
        <taxon>Vesiculovirus indiana</taxon>
    </lineage>
</organism>
<keyword id="KW-0024">Alternative initiation</keyword>
<keyword id="KW-0053">Apoptosis</keyword>
<keyword id="KW-1262">Eukaryotic host gene expression shutoff by virus</keyword>
<keyword id="KW-1035">Host cytoplasm</keyword>
<keyword id="KW-1190">Host gene expression shutoff by virus</keyword>
<keyword id="KW-1043">Host membrane</keyword>
<keyword id="KW-1192">Host mRNA suppression by virus</keyword>
<keyword id="KW-1048">Host nucleus</keyword>
<keyword id="KW-0945">Host-virus interaction</keyword>
<keyword id="KW-1099">Inhibition of host mRNA nuclear export by virus</keyword>
<keyword id="KW-0472">Membrane</keyword>
<keyword id="KW-0597">Phosphoprotein</keyword>
<keyword id="KW-1198">Viral budding</keyword>
<keyword id="KW-1187">Viral budding via the host ESCRT complexes</keyword>
<keyword id="KW-0468">Viral matrix protein</keyword>
<keyword id="KW-1188">Viral release from host cell</keyword>
<keyword id="KW-0946">Virion</keyword>
<proteinExistence type="evidence at protein level"/>
<comment type="function">
    <text evidence="1">Forms a double layer around the helical nucleocapsid, the inner matrix layer binding to the N helix and the outer matrix layer binding to the envelope glycoprotein. Plays a major role in assembly and budding of virion, by recruiting cellular partners of the ESCRT complexes that play a key role in releasing the budding particle from the host membrane. Condensates the ribonucleocapsid core during virus assembly. Inhibits the host mRNA nuclear export thereby inducing the shut off of cellular transcription and preventing the interferon signaling and the establishment of antiviral state in infected cells. This shutoff presumably inhibits interferon signaling and thus establishment of antiviral state in virus infected cells. Induces cell-rounding, cytoskeleton disorganization and apoptosis in infected cell. Inhibits host transcription, possibly through interaction with host DNA repair factor IIH/TFIIH GTF2H5 subunit.</text>
</comment>
<comment type="subunit">
    <text evidence="1 2">Homomultimer. Interacts with viral nucleocapsid; this interaction contributes to the virion assembly (By similarity). Interacts with the viral envelope glycoprotein; this interaction contributes to the virion assembly (By similarity). Interacts with host RAE1-NUP98 complex. Interacts with host NEDD4 and TSG101. Interacts with host dynamin. Interacts with host NDUFAF4; the interaction inhibits viral propagation and is independent of interferon activation. Interacts with host GTF2H5; the interaction may inhibit host transcription (By similarity).</text>
</comment>
<comment type="interaction">
    <interactant intactId="EBI-40246327">
        <id>P04876</id>
    </interactant>
    <interactant intactId="EBI-1564678">
        <id>Q96J02</id>
        <label>ITCH</label>
    </interactant>
    <organismsDiffer>true</organismsDiffer>
    <experiments>2</experiments>
</comment>
<comment type="subcellular location">
    <subcellularLocation>
        <location evidence="1">Virion</location>
    </subcellularLocation>
    <subcellularLocation>
        <location evidence="1">Host endomembrane system</location>
        <topology evidence="1">Peripheral membrane protein</topology>
    </subcellularLocation>
    <subcellularLocation>
        <location evidence="1">Host nucleus membrane</location>
        <topology evidence="1">Peripheral membrane protein</topology>
    </subcellularLocation>
    <subcellularLocation>
        <location evidence="1">Host nucleus</location>
    </subcellularLocation>
    <subcellularLocation>
        <location evidence="1">Host cytoplasm</location>
    </subcellularLocation>
    <text evidence="1">In the virion, forms a double layer around the helical nucleocapsid, the inner matrix layer binding to the N helix and the outer matrix layer binding to the envelope glycoprotein. About 2480 copies of M are present in the virion.</text>
</comment>
<comment type="alternative products">
    <event type="alternative initiation"/>
    <isoform>
        <id>P04876-1</id>
        <name>M</name>
        <sequence type="displayed"/>
    </isoform>
    <isoform>
        <id>P04876-2</id>
        <name>M2</name>
        <sequence type="described" ref="VSP_025419"/>
    </isoform>
    <isoform>
        <id>P04876-3</id>
        <name>M3</name>
        <sequence type="described" ref="VSP_025418"/>
    </isoform>
</comment>
<comment type="domain">
    <text evidence="1">Late-budding domains (L domains) are short sequence motifs essential for viral particle budding. They recruit proteins of the host ESCRT machinery (Endosomal Sorting Complex Required for Transport) or ESCRT-associated proteins. M contains two overlapping L domains: a PPXY motif which interacts with the WW domain 3 of NEDD4 and a PTAP/PSAP motif, which interacts with the UEV domain of TSG101.</text>
</comment>
<comment type="PTM">
    <text evidence="1">Phosphorylated by host.</text>
</comment>
<comment type="biotechnology">
    <text>VSV is used as an oncolytic agent for cancer therapy, because of his wide host range, rapid replication and mild pathogenicity in humans. VSV used are mutated at M51R in their matrix protein. These mutated viruses cannot successfully infect normal cells, being unable to counteract the antiviral state induced by interferon-alpha in normal cells. Cancer cells are impeded with responsiveness to interferon, and then can be successfully infected and lysed by the virus.</text>
</comment>
<comment type="similarity">
    <text evidence="4">Belongs to the vesiculoviruses matrix protein family.</text>
</comment>
<feature type="chain" id="PRO_0000222855" description="Matrix protein">
    <location>
        <begin position="1"/>
        <end position="237"/>
    </location>
</feature>
<feature type="region of interest" description="Disordered" evidence="3">
    <location>
        <begin position="1"/>
        <end position="23"/>
    </location>
</feature>
<feature type="short sequence motif" description="dynamin binding" evidence="1">
    <location>
        <begin position="2"/>
        <end position="4"/>
    </location>
</feature>
<feature type="short sequence motif" description="PPXY motif" evidence="1">
    <location>
        <begin position="24"/>
        <end position="27"/>
    </location>
</feature>
<feature type="short sequence motif" description="PTAP/PSAP motif" evidence="1">
    <location>
        <begin position="37"/>
        <end position="40"/>
    </location>
</feature>
<feature type="compositionally biased region" description="Low complexity" evidence="3">
    <location>
        <begin position="1"/>
        <end position="10"/>
    </location>
</feature>
<feature type="splice variant" id="VSP_025418" description="In isoform M3." evidence="4">
    <location>
        <begin position="1"/>
        <end position="50"/>
    </location>
</feature>
<feature type="splice variant" id="VSP_025419" description="In isoform M2." evidence="4">
    <location>
        <begin position="1"/>
        <end position="32"/>
    </location>
</feature>
<feature type="sequence conflict" description="In Ref. 2; AAA48444." evidence="4" ref="2">
    <original>S</original>
    <variation>N</variation>
    <location>
        <position position="32"/>
    </location>
</feature>
<feature type="sequence conflict" description="In Ref. 2; AAA48444." evidence="4" ref="2">
    <original>S</original>
    <variation>F</variation>
    <location>
        <position position="64"/>
    </location>
</feature>
<feature type="sequence conflict" description="In Ref. 2; AAA48444." evidence="4" ref="2">
    <original>E</original>
    <variation>K</variation>
    <location>
        <position position="215"/>
    </location>
</feature>
<feature type="sequence conflict" description="In Ref. 2; AAA48444." evidence="4" ref="2">
    <original>S</original>
    <variation>F</variation>
    <location>
        <position position="228"/>
    </location>
</feature>